<feature type="initiator methionine" description="Removed" evidence="1">
    <location>
        <position position="1"/>
    </location>
</feature>
<feature type="chain" id="PRO_0000204536" description="Methionine synthase">
    <location>
        <begin position="2"/>
        <end position="1227"/>
    </location>
</feature>
<feature type="domain" description="Hcy-binding" evidence="3">
    <location>
        <begin position="2"/>
        <end position="325"/>
    </location>
</feature>
<feature type="domain" description="Pterin-binding" evidence="4">
    <location>
        <begin position="356"/>
        <end position="617"/>
    </location>
</feature>
<feature type="domain" description="B12-binding N-terminal" evidence="7">
    <location>
        <begin position="650"/>
        <end position="744"/>
    </location>
</feature>
<feature type="domain" description="B12-binding" evidence="6">
    <location>
        <begin position="746"/>
        <end position="881"/>
    </location>
</feature>
<feature type="domain" description="AdoMet activation" evidence="5">
    <location>
        <begin position="897"/>
        <end position="1227"/>
    </location>
</feature>
<feature type="binding site" evidence="3">
    <location>
        <position position="247"/>
    </location>
    <ligand>
        <name>Zn(2+)</name>
        <dbReference type="ChEBI" id="CHEBI:29105"/>
    </ligand>
</feature>
<feature type="binding site" evidence="3">
    <location>
        <position position="310"/>
    </location>
    <ligand>
        <name>Zn(2+)</name>
        <dbReference type="ChEBI" id="CHEBI:29105"/>
    </ligand>
</feature>
<feature type="binding site" evidence="3">
    <location>
        <position position="311"/>
    </location>
    <ligand>
        <name>Zn(2+)</name>
        <dbReference type="ChEBI" id="CHEBI:29105"/>
    </ligand>
</feature>
<feature type="binding site" evidence="2">
    <location>
        <position position="694"/>
    </location>
    <ligand>
        <name>methylcob(III)alamin</name>
        <dbReference type="ChEBI" id="CHEBI:28115"/>
    </ligand>
</feature>
<feature type="binding site" evidence="2">
    <location>
        <begin position="756"/>
        <end position="760"/>
    </location>
    <ligand>
        <name>methylcob(III)alamin</name>
        <dbReference type="ChEBI" id="CHEBI:28115"/>
    </ligand>
</feature>
<feature type="binding site" description="axial binding residue" evidence="2">
    <location>
        <position position="759"/>
    </location>
    <ligand>
        <name>methylcob(III)alamin</name>
        <dbReference type="ChEBI" id="CHEBI:28115"/>
    </ligand>
    <ligandPart>
        <name>Co</name>
        <dbReference type="ChEBI" id="CHEBI:27638"/>
    </ligandPart>
</feature>
<feature type="binding site" evidence="2">
    <location>
        <position position="804"/>
    </location>
    <ligand>
        <name>methylcob(III)alamin</name>
        <dbReference type="ChEBI" id="CHEBI:28115"/>
    </ligand>
</feature>
<feature type="binding site" evidence="2">
    <location>
        <position position="808"/>
    </location>
    <ligand>
        <name>methylcob(III)alamin</name>
        <dbReference type="ChEBI" id="CHEBI:28115"/>
    </ligand>
</feature>
<feature type="binding site" evidence="2">
    <location>
        <position position="860"/>
    </location>
    <ligand>
        <name>methylcob(III)alamin</name>
        <dbReference type="ChEBI" id="CHEBI:28115"/>
    </ligand>
</feature>
<feature type="binding site" evidence="1">
    <location>
        <position position="946"/>
    </location>
    <ligand>
        <name>S-adenosyl-L-methionine</name>
        <dbReference type="ChEBI" id="CHEBI:59789"/>
    </ligand>
</feature>
<feature type="binding site" evidence="1">
    <location>
        <position position="1134"/>
    </location>
    <ligand>
        <name>S-adenosyl-L-methionine</name>
        <dbReference type="ChEBI" id="CHEBI:59789"/>
    </ligand>
</feature>
<feature type="binding site" evidence="1">
    <location>
        <begin position="1189"/>
        <end position="1190"/>
    </location>
    <ligand>
        <name>S-adenosyl-L-methionine</name>
        <dbReference type="ChEBI" id="CHEBI:59789"/>
    </ligand>
</feature>
<feature type="sequence conflict" description="In Ref. 2." evidence="8" ref="2">
    <original>A</original>
    <variation>R</variation>
    <location>
        <position position="115"/>
    </location>
</feature>
<evidence type="ECO:0000250" key="1"/>
<evidence type="ECO:0000250" key="2">
    <source>
        <dbReference type="UniProtKB" id="P13009"/>
    </source>
</evidence>
<evidence type="ECO:0000255" key="3">
    <source>
        <dbReference type="PROSITE-ProRule" id="PRU00333"/>
    </source>
</evidence>
<evidence type="ECO:0000255" key="4">
    <source>
        <dbReference type="PROSITE-ProRule" id="PRU00334"/>
    </source>
</evidence>
<evidence type="ECO:0000255" key="5">
    <source>
        <dbReference type="PROSITE-ProRule" id="PRU00346"/>
    </source>
</evidence>
<evidence type="ECO:0000255" key="6">
    <source>
        <dbReference type="PROSITE-ProRule" id="PRU00666"/>
    </source>
</evidence>
<evidence type="ECO:0000255" key="7">
    <source>
        <dbReference type="PROSITE-ProRule" id="PRU00667"/>
    </source>
</evidence>
<evidence type="ECO:0000305" key="8"/>
<reference key="1">
    <citation type="journal article" date="2001" name="Nature">
        <title>Complete genome sequence of Salmonella enterica serovar Typhimurium LT2.</title>
        <authorList>
            <person name="McClelland M."/>
            <person name="Sanderson K.E."/>
            <person name="Spieth J."/>
            <person name="Clifton S.W."/>
            <person name="Latreille P."/>
            <person name="Courtney L."/>
            <person name="Porwollik S."/>
            <person name="Ali J."/>
            <person name="Dante M."/>
            <person name="Du F."/>
            <person name="Hou S."/>
            <person name="Layman D."/>
            <person name="Leonard S."/>
            <person name="Nguyen C."/>
            <person name="Scott K."/>
            <person name="Holmes A."/>
            <person name="Grewal N."/>
            <person name="Mulvaney E."/>
            <person name="Ryan E."/>
            <person name="Sun H."/>
            <person name="Florea L."/>
            <person name="Miller W."/>
            <person name="Stoneking T."/>
            <person name="Nhan M."/>
            <person name="Waterston R."/>
            <person name="Wilson R.K."/>
        </authorList>
    </citation>
    <scope>NUCLEOTIDE SEQUENCE [LARGE SCALE GENOMIC DNA]</scope>
    <source>
        <strain>LT2 / SGSC1412 / ATCC 700720</strain>
    </source>
</reference>
<reference key="2">
    <citation type="journal article" date="1988" name="Gene">
        <title>The control region of the metH gene of Salmonella typhimurium LT2: an atypical met promoter.</title>
        <authorList>
            <person name="Urbanowski M.L."/>
            <person name="Stauffer G.V."/>
        </authorList>
    </citation>
    <scope>NUCLEOTIDE SEQUENCE [GENOMIC DNA] OF 1-371</scope>
    <source>
        <strain>LT2</strain>
    </source>
</reference>
<gene>
    <name type="primary">metH</name>
    <name type="ordered locus">STM4188</name>
</gene>
<protein>
    <recommendedName>
        <fullName>Methionine synthase</fullName>
        <ecNumber>2.1.1.13</ecNumber>
    </recommendedName>
    <alternativeName>
        <fullName>5-methyltetrahydrofolate--homocysteine methyltransferase</fullName>
    </alternativeName>
    <alternativeName>
        <fullName>Methionine synthase, vitamin-B12 dependent</fullName>
        <shortName>MS</shortName>
    </alternativeName>
</protein>
<dbReference type="EC" id="2.1.1.13"/>
<dbReference type="EMBL" id="AE006468">
    <property type="protein sequence ID" value="AAL23012.1"/>
    <property type="status" value="ALT_INIT"/>
    <property type="molecule type" value="Genomic_DNA"/>
</dbReference>
<dbReference type="RefSeq" id="NP_463053.3">
    <property type="nucleotide sequence ID" value="NC_003197.2"/>
</dbReference>
<dbReference type="RefSeq" id="WP_014343933.1">
    <property type="nucleotide sequence ID" value="NC_003197.2"/>
</dbReference>
<dbReference type="SMR" id="P37586"/>
<dbReference type="STRING" id="99287.STM4188"/>
<dbReference type="PaxDb" id="99287-STM4188"/>
<dbReference type="GeneID" id="1255714"/>
<dbReference type="KEGG" id="stm:STM4188"/>
<dbReference type="PATRIC" id="fig|99287.12.peg.4402"/>
<dbReference type="HOGENOM" id="CLU_004914_2_2_6"/>
<dbReference type="PhylomeDB" id="P37586"/>
<dbReference type="UniPathway" id="UPA00051">
    <property type="reaction ID" value="UER00081"/>
</dbReference>
<dbReference type="PHI-base" id="PHI:8092"/>
<dbReference type="Proteomes" id="UP000001014">
    <property type="component" value="Chromosome"/>
</dbReference>
<dbReference type="GO" id="GO:0005829">
    <property type="term" value="C:cytosol"/>
    <property type="evidence" value="ECO:0000318"/>
    <property type="project" value="GO_Central"/>
</dbReference>
<dbReference type="GO" id="GO:0031419">
    <property type="term" value="F:cobalamin binding"/>
    <property type="evidence" value="ECO:0007669"/>
    <property type="project" value="UniProtKB-KW"/>
</dbReference>
<dbReference type="GO" id="GO:0008705">
    <property type="term" value="F:methionine synthase activity"/>
    <property type="evidence" value="ECO:0000318"/>
    <property type="project" value="GO_Central"/>
</dbReference>
<dbReference type="GO" id="GO:0008270">
    <property type="term" value="F:zinc ion binding"/>
    <property type="evidence" value="ECO:0007669"/>
    <property type="project" value="InterPro"/>
</dbReference>
<dbReference type="GO" id="GO:0050667">
    <property type="term" value="P:homocysteine metabolic process"/>
    <property type="evidence" value="ECO:0000318"/>
    <property type="project" value="GO_Central"/>
</dbReference>
<dbReference type="GO" id="GO:0009086">
    <property type="term" value="P:methionine biosynthetic process"/>
    <property type="evidence" value="ECO:0000318"/>
    <property type="project" value="GO_Central"/>
</dbReference>
<dbReference type="GO" id="GO:0032259">
    <property type="term" value="P:methylation"/>
    <property type="evidence" value="ECO:0007669"/>
    <property type="project" value="UniProtKB-KW"/>
</dbReference>
<dbReference type="GO" id="GO:0046653">
    <property type="term" value="P:tetrahydrofolate metabolic process"/>
    <property type="evidence" value="ECO:0000318"/>
    <property type="project" value="GO_Central"/>
</dbReference>
<dbReference type="CDD" id="cd02069">
    <property type="entry name" value="methionine_synthase_B12_BD"/>
    <property type="match status" value="1"/>
</dbReference>
<dbReference type="CDD" id="cd00740">
    <property type="entry name" value="MeTr"/>
    <property type="match status" value="1"/>
</dbReference>
<dbReference type="FunFam" id="1.10.1240.10:FF:000001">
    <property type="entry name" value="Methionine synthase"/>
    <property type="match status" value="1"/>
</dbReference>
<dbReference type="FunFam" id="3.20.20.20:FF:000002">
    <property type="entry name" value="Methionine synthase"/>
    <property type="match status" value="1"/>
</dbReference>
<dbReference type="FunFam" id="3.20.20.330:FF:000001">
    <property type="entry name" value="Methionine synthase"/>
    <property type="match status" value="1"/>
</dbReference>
<dbReference type="FunFam" id="3.40.50.280:FF:000001">
    <property type="entry name" value="Methionine synthase"/>
    <property type="match status" value="1"/>
</dbReference>
<dbReference type="Gene3D" id="3.40.50.280">
    <property type="entry name" value="Cobalamin-binding domain"/>
    <property type="match status" value="1"/>
</dbReference>
<dbReference type="Gene3D" id="1.10.288.10">
    <property type="entry name" value="Cobalamin-dependent Methionine Synthase, domain 2"/>
    <property type="match status" value="1"/>
</dbReference>
<dbReference type="Gene3D" id="3.20.20.20">
    <property type="entry name" value="Dihydropteroate synthase-like"/>
    <property type="match status" value="1"/>
</dbReference>
<dbReference type="Gene3D" id="3.20.20.330">
    <property type="entry name" value="Homocysteine-binding-like domain"/>
    <property type="match status" value="1"/>
</dbReference>
<dbReference type="Gene3D" id="1.10.1240.10">
    <property type="entry name" value="Methionine synthase domain"/>
    <property type="match status" value="1"/>
</dbReference>
<dbReference type="Gene3D" id="3.10.196.10">
    <property type="entry name" value="Vitamin B12-dependent methionine synthase, activation domain"/>
    <property type="match status" value="1"/>
</dbReference>
<dbReference type="InterPro" id="IPR003759">
    <property type="entry name" value="Cbl-bd_cap"/>
</dbReference>
<dbReference type="InterPro" id="IPR006158">
    <property type="entry name" value="Cobalamin-bd"/>
</dbReference>
<dbReference type="InterPro" id="IPR036724">
    <property type="entry name" value="Cobalamin-bd_sf"/>
</dbReference>
<dbReference type="InterPro" id="IPR011005">
    <property type="entry name" value="Dihydropteroate_synth-like_sf"/>
</dbReference>
<dbReference type="InterPro" id="IPR003726">
    <property type="entry name" value="HCY_dom"/>
</dbReference>
<dbReference type="InterPro" id="IPR036589">
    <property type="entry name" value="HCY_dom_sf"/>
</dbReference>
<dbReference type="InterPro" id="IPR050554">
    <property type="entry name" value="Met_Synthase/Corrinoid"/>
</dbReference>
<dbReference type="InterPro" id="IPR033706">
    <property type="entry name" value="Met_synthase_B12-bd"/>
</dbReference>
<dbReference type="InterPro" id="IPR011822">
    <property type="entry name" value="MetH"/>
</dbReference>
<dbReference type="InterPro" id="IPR036594">
    <property type="entry name" value="Meth_synthase_dom"/>
</dbReference>
<dbReference type="InterPro" id="IPR000489">
    <property type="entry name" value="Pterin-binding_dom"/>
</dbReference>
<dbReference type="InterPro" id="IPR004223">
    <property type="entry name" value="VitB12-dep_Met_synth_activ_dom"/>
</dbReference>
<dbReference type="InterPro" id="IPR037010">
    <property type="entry name" value="VitB12-dep_Met_synth_activ_sf"/>
</dbReference>
<dbReference type="NCBIfam" id="TIGR02082">
    <property type="entry name" value="metH"/>
    <property type="match status" value="1"/>
</dbReference>
<dbReference type="NCBIfam" id="NF007024">
    <property type="entry name" value="PRK09490.1"/>
    <property type="match status" value="1"/>
</dbReference>
<dbReference type="PANTHER" id="PTHR45833">
    <property type="entry name" value="METHIONINE SYNTHASE"/>
    <property type="match status" value="1"/>
</dbReference>
<dbReference type="PANTHER" id="PTHR45833:SF1">
    <property type="entry name" value="METHIONINE SYNTHASE"/>
    <property type="match status" value="1"/>
</dbReference>
<dbReference type="Pfam" id="PF02310">
    <property type="entry name" value="B12-binding"/>
    <property type="match status" value="1"/>
</dbReference>
<dbReference type="Pfam" id="PF02607">
    <property type="entry name" value="B12-binding_2"/>
    <property type="match status" value="1"/>
</dbReference>
<dbReference type="Pfam" id="PF02965">
    <property type="entry name" value="Met_synt_B12"/>
    <property type="match status" value="1"/>
</dbReference>
<dbReference type="Pfam" id="PF00809">
    <property type="entry name" value="Pterin_bind"/>
    <property type="match status" value="1"/>
</dbReference>
<dbReference type="Pfam" id="PF02574">
    <property type="entry name" value="S-methyl_trans"/>
    <property type="match status" value="1"/>
</dbReference>
<dbReference type="PIRSF" id="PIRSF000381">
    <property type="entry name" value="MetH"/>
    <property type="match status" value="1"/>
</dbReference>
<dbReference type="SMART" id="SM01018">
    <property type="entry name" value="B12-binding_2"/>
    <property type="match status" value="1"/>
</dbReference>
<dbReference type="SUPFAM" id="SSF52242">
    <property type="entry name" value="Cobalamin (vitamin B12)-binding domain"/>
    <property type="match status" value="1"/>
</dbReference>
<dbReference type="SUPFAM" id="SSF51717">
    <property type="entry name" value="Dihydropteroate synthetase-like"/>
    <property type="match status" value="1"/>
</dbReference>
<dbReference type="SUPFAM" id="SSF82282">
    <property type="entry name" value="Homocysteine S-methyltransferase"/>
    <property type="match status" value="1"/>
</dbReference>
<dbReference type="SUPFAM" id="SSF56507">
    <property type="entry name" value="Methionine synthase activation domain-like"/>
    <property type="match status" value="1"/>
</dbReference>
<dbReference type="SUPFAM" id="SSF47644">
    <property type="entry name" value="Methionine synthase domain"/>
    <property type="match status" value="1"/>
</dbReference>
<dbReference type="PROSITE" id="PS50974">
    <property type="entry name" value="ADOMET_ACTIVATION"/>
    <property type="match status" value="1"/>
</dbReference>
<dbReference type="PROSITE" id="PS51332">
    <property type="entry name" value="B12_BINDING"/>
    <property type="match status" value="1"/>
</dbReference>
<dbReference type="PROSITE" id="PS51337">
    <property type="entry name" value="B12_BINDING_NTER"/>
    <property type="match status" value="1"/>
</dbReference>
<dbReference type="PROSITE" id="PS50970">
    <property type="entry name" value="HCY"/>
    <property type="match status" value="1"/>
</dbReference>
<dbReference type="PROSITE" id="PS50972">
    <property type="entry name" value="PTERIN_BINDING"/>
    <property type="match status" value="1"/>
</dbReference>
<comment type="function">
    <text evidence="1">Catalyzes the transfer of a methyl group from methyl-cobalamin to homocysteine, yielding enzyme-bound cob(I)alamin and methionine. Subsequently, remethylates the cofactor using methyltetrahydrofolate (By similarity).</text>
</comment>
<comment type="catalytic activity">
    <reaction>
        <text>(6S)-5-methyl-5,6,7,8-tetrahydrofolate + L-homocysteine = (6S)-5,6,7,8-tetrahydrofolate + L-methionine</text>
        <dbReference type="Rhea" id="RHEA:11172"/>
        <dbReference type="ChEBI" id="CHEBI:18608"/>
        <dbReference type="ChEBI" id="CHEBI:57453"/>
        <dbReference type="ChEBI" id="CHEBI:57844"/>
        <dbReference type="ChEBI" id="CHEBI:58199"/>
        <dbReference type="EC" id="2.1.1.13"/>
    </reaction>
</comment>
<comment type="cofactor">
    <cofactor evidence="1">
        <name>methylcob(III)alamin</name>
        <dbReference type="ChEBI" id="CHEBI:28115"/>
    </cofactor>
</comment>
<comment type="cofactor">
    <cofactor evidence="1">
        <name>Zn(2+)</name>
        <dbReference type="ChEBI" id="CHEBI:29105"/>
    </cofactor>
    <text evidence="1">Binds 1 zinc ion per subunit.</text>
</comment>
<comment type="pathway">
    <text>Amino-acid biosynthesis; L-methionine biosynthesis via de novo pathway; L-methionine from L-homocysteine (MetH route): step 1/1.</text>
</comment>
<comment type="domain">
    <text evidence="1">Modular enzyme with four functionally distinct domains. The isolated Hcy-binding domain catalyzes methyl transfer from free methylcobalamin to homocysteine. The Hcy-binding domain in association with the pterin-binding domain catalyzes the methylation of cob(I)alamin by methyltetrahydrofolate and the methylation of homocysteine. The B12-binding domain binds the cofactor. The AdoMet activation domain binds S-adenosyl-L-methionine. Under aerobic conditions cob(I)alamin can be converted to inactive cob(II)alamin. Reductive methylation by S-adenosyl-L-methionine and flavodoxin regenerates methylcobalamin (By similarity).</text>
</comment>
<comment type="miscellaneous">
    <text evidence="1">L-homocysteine is bound via the zinc atom.</text>
</comment>
<comment type="similarity">
    <text evidence="8">Belongs to the vitamin-B12 dependent methionine synthase family.</text>
</comment>
<comment type="sequence caution" evidence="8">
    <conflict type="erroneous initiation">
        <sequence resource="EMBL-CDS" id="AAL23012"/>
    </conflict>
</comment>
<keyword id="KW-0028">Amino-acid biosynthesis</keyword>
<keyword id="KW-0846">Cobalamin</keyword>
<keyword id="KW-0170">Cobalt</keyword>
<keyword id="KW-0479">Metal-binding</keyword>
<keyword id="KW-0486">Methionine biosynthesis</keyword>
<keyword id="KW-0489">Methyltransferase</keyword>
<keyword id="KW-1185">Reference proteome</keyword>
<keyword id="KW-0677">Repeat</keyword>
<keyword id="KW-0949">S-adenosyl-L-methionine</keyword>
<keyword id="KW-0808">Transferase</keyword>
<keyword id="KW-0862">Zinc</keyword>
<sequence length="1227" mass="136004">MSSKVEQLRAQLNERILVLDGGMGTMIQSYRLHEEDFRGERFADWPCDLKGNNDLLVLSKPEVIAAIHNAYFEAGADIIETNTFNSTTIAMADYRMESLSAEINYAAAKLARACADEWTARTPEKPRFVAGVLGPTNRTASISPDVNDPAFRNITFDQLVAAYRESTKALVEGGADLILIETVFDTLNAKAAVFAVKEEFEALGVDLPIMISGTITDASGRTLSGQTTEAFYNSLRHAEALTFGLNCALGPDELRQYVQELSRIAECYVTAHPNAGLPNAFGEYDLDADTMAKQIREWAEAGFLNIVGGCCGTTPEHIAAMSRAVAGLLPRQLPDIPVACRLSGLEPLNIGDDSLFVNVGERTNVTGSAKFKRLIKEEKYSEALDVARQQVESGAQIIDINMDEGMLDAEAAMVRFLSLIAGEPDIARVPIMIDSSKWEVIEKGLKCIQGKGIVNSISMKEGVEAFIHHAKLLRRYGAAVVVMAFDEQGQADTRARKIEICRRAYKILTEEVGFPPEDIIFDPNIFAVATGIEEHNNYAQDFIGACEDIKRELPHALISGGVSNVSFSFRGNDPVREAIHAVFLYYAIRNGMDMGIVNAGQLAIYDDLPAELRDAVEDVILNRRDDGTERLLDLAEKYRGSKTDEAANAQQAEWRSWDVKKRLEYSLVKGITEFIEQDTEEARQQAARPIEVIEGPLMDGMNVVGDLFGEGKMFLPQVVKSARVMKQAVAYLEPFIEASKEKGSSNGKMVIATVKGDVHDIGKNIVGVVLQCNNYEIVDLGVMVPAEKILRTAREVNADLIGLSGLITPSLDEMVNVAKEMERQGFTIPLLIGGATTSKAHTAVKIEQNYSGPTVYVQNASRTVGVVAALLSDTQRDDFVARTRKEYETVRIQHARKKPRTPPVTLEAARDNDLAFDWERYTPPVAHRLGVQEVEASIETLRNYIDWTPFFMTWSLAGKYPRILEDEVVGVEAQRLFKDANDMLDKLSAEKLLNPRGVVGLFPANRVGDDIEIYRDETRTHVLTVSHHLRQQTEKVGFANYCLADFVAPKLSGKADYIGAFAVTGGLEEDALADAFEAQHDDYNKIMVKAIADRLAEAFAEYLHERVRKVYWGYAPNESLSNDELIRENYQGIRPAPGYPACPEHTEKGTIWQLLDVEKHTGMKLTESFAMWPGASVSGWYFSHPESKYFAVAQIQRDQVTDYAFRKGMSVEDVERWLAPNLGYDAD</sequence>
<organism>
    <name type="scientific">Salmonella typhimurium (strain LT2 / SGSC1412 / ATCC 700720)</name>
    <dbReference type="NCBI Taxonomy" id="99287"/>
    <lineage>
        <taxon>Bacteria</taxon>
        <taxon>Pseudomonadati</taxon>
        <taxon>Pseudomonadota</taxon>
        <taxon>Gammaproteobacteria</taxon>
        <taxon>Enterobacterales</taxon>
        <taxon>Enterobacteriaceae</taxon>
        <taxon>Salmonella</taxon>
    </lineage>
</organism>
<name>METH_SALTY</name>
<proteinExistence type="inferred from homology"/>
<accession>P37586</accession>